<comment type="function">
    <text evidence="1 3">Required for the synthesis of the 60S ribosomal subunit and maturation of the 28S rRNA (By similarity). Functions as a component of the Five Friends of Methylated CHTOP (5FMC) complex; the 5FMC complex is recruited to ZNF148 by methylated CHTOP, leading to desumoylation of ZNF148 and subsequent transactivation of ZNF148 target genes (PubMed:22872859). Required for the efficient pre-rRNA processing at both ends of internal transcribed spacer 2 (ITS2) (By similarity).</text>
</comment>
<comment type="subunit">
    <text evidence="1 3">Component of some MLL1/MLL complex, at least composed of the core components KMT2A/MLL1, ASH2L, HCFC1/HCF1, WDR5 and RBBP5, as well as the facultative components BACC1, CHD8, E2F6, HSP70, INO80C, KANSL1, LAS1L, MAX, MCRS1, MGA, MYST1/MOF, PELP1, PHF20, PRP31, RING2, RUVB1/TIP49A, RUVB2/TIP49B, SENP3, TAF1, TAF4, TAF6, TAF7, TAF9 and TEX10 (By similarity). Component of the 5FMC complex, at least composed of PELP1, LAS1L, TEX10, WDR18 and SENP3; the complex interacts with methylated CHTOP and ZNF148. Interacts with NOL9 to form an ITS2 pre-rRNA endonuclease-kinase complex (By similarity).</text>
</comment>
<comment type="subcellular location">
    <subcellularLocation>
        <location evidence="1">Nucleus</location>
        <location evidence="1">Nucleolus</location>
    </subcellularLocation>
    <subcellularLocation>
        <location evidence="3">Nucleus</location>
        <location evidence="3">Nucleoplasm</location>
    </subcellularLocation>
    <subcellularLocation>
        <location evidence="3">Cytoplasm</location>
    </subcellularLocation>
    <text evidence="1 3">Localizes mainly to the granular component, the region implicated in the later steps of rRNA processing and subunit assembly and export (By similarity). Mainly found in the nucleoplasm, with low levels detected in the cytoplasmic and chromatin fractions.</text>
</comment>
<comment type="alternative products">
    <event type="alternative splicing"/>
    <isoform>
        <id>A2BE28-1</id>
        <name>1</name>
        <sequence type="displayed"/>
    </isoform>
    <isoform>
        <id>A2BE28-2</id>
        <name>2</name>
        <sequence type="described" ref="VSP_038670"/>
    </isoform>
</comment>
<comment type="similarity">
    <text evidence="5">Belongs to the LAS1 family.</text>
</comment>
<evidence type="ECO:0000250" key="1">
    <source>
        <dbReference type="UniProtKB" id="Q9Y4W2"/>
    </source>
</evidence>
<evidence type="ECO:0000256" key="2">
    <source>
        <dbReference type="SAM" id="MobiDB-lite"/>
    </source>
</evidence>
<evidence type="ECO:0000269" key="3">
    <source>
    </source>
</evidence>
<evidence type="ECO:0000303" key="4">
    <source>
    </source>
</evidence>
<evidence type="ECO:0000305" key="5"/>
<name>LAS1L_MOUSE</name>
<gene>
    <name type="primary">Las1l</name>
</gene>
<organism>
    <name type="scientific">Mus musculus</name>
    <name type="common">Mouse</name>
    <dbReference type="NCBI Taxonomy" id="10090"/>
    <lineage>
        <taxon>Eukaryota</taxon>
        <taxon>Metazoa</taxon>
        <taxon>Chordata</taxon>
        <taxon>Craniata</taxon>
        <taxon>Vertebrata</taxon>
        <taxon>Euteleostomi</taxon>
        <taxon>Mammalia</taxon>
        <taxon>Eutheria</taxon>
        <taxon>Euarchontoglires</taxon>
        <taxon>Glires</taxon>
        <taxon>Rodentia</taxon>
        <taxon>Myomorpha</taxon>
        <taxon>Muroidea</taxon>
        <taxon>Muridae</taxon>
        <taxon>Murinae</taxon>
        <taxon>Mus</taxon>
        <taxon>Mus</taxon>
    </lineage>
</organism>
<keyword id="KW-0025">Alternative splicing</keyword>
<keyword id="KW-0963">Cytoplasm</keyword>
<keyword id="KW-0378">Hydrolase</keyword>
<keyword id="KW-0539">Nucleus</keyword>
<keyword id="KW-0597">Phosphoprotein</keyword>
<keyword id="KW-1185">Reference proteome</keyword>
<keyword id="KW-0698">rRNA processing</keyword>
<accession>A2BE28</accession>
<accession>A2BE30</accession>
<accession>Q6KAR5</accession>
<accession>Q8C742</accession>
<reference key="1">
    <citation type="journal article" date="2009" name="PLoS Biol.">
        <title>Lineage-specific biology revealed by a finished genome assembly of the mouse.</title>
        <authorList>
            <person name="Church D.M."/>
            <person name="Goodstadt L."/>
            <person name="Hillier L.W."/>
            <person name="Zody M.C."/>
            <person name="Goldstein S."/>
            <person name="She X."/>
            <person name="Bult C.J."/>
            <person name="Agarwala R."/>
            <person name="Cherry J.L."/>
            <person name="DiCuccio M."/>
            <person name="Hlavina W."/>
            <person name="Kapustin Y."/>
            <person name="Meric P."/>
            <person name="Maglott D."/>
            <person name="Birtle Z."/>
            <person name="Marques A.C."/>
            <person name="Graves T."/>
            <person name="Zhou S."/>
            <person name="Teague B."/>
            <person name="Potamousis K."/>
            <person name="Churas C."/>
            <person name="Place M."/>
            <person name="Herschleb J."/>
            <person name="Runnheim R."/>
            <person name="Forrest D."/>
            <person name="Amos-Landgraf J."/>
            <person name="Schwartz D.C."/>
            <person name="Cheng Z."/>
            <person name="Lindblad-Toh K."/>
            <person name="Eichler E.E."/>
            <person name="Ponting C.P."/>
        </authorList>
    </citation>
    <scope>NUCLEOTIDE SEQUENCE [LARGE SCALE GENOMIC DNA]</scope>
    <source>
        <strain>C57BL/6J</strain>
    </source>
</reference>
<reference key="2">
    <citation type="journal article" date="2004" name="Genome Res.">
        <title>The status, quality, and expansion of the NIH full-length cDNA project: the Mammalian Gene Collection (MGC).</title>
        <authorList>
            <consortium name="The MGC Project Team"/>
        </authorList>
    </citation>
    <scope>NUCLEOTIDE SEQUENCE [LARGE SCALE MRNA] (ISOFORM 1)</scope>
    <source>
        <tissue>Brain</tissue>
    </source>
</reference>
<reference key="3">
    <citation type="journal article" date="2005" name="Science">
        <title>The transcriptional landscape of the mammalian genome.</title>
        <authorList>
            <person name="Carninci P."/>
            <person name="Kasukawa T."/>
            <person name="Katayama S."/>
            <person name="Gough J."/>
            <person name="Frith M.C."/>
            <person name="Maeda N."/>
            <person name="Oyama R."/>
            <person name="Ravasi T."/>
            <person name="Lenhard B."/>
            <person name="Wells C."/>
            <person name="Kodzius R."/>
            <person name="Shimokawa K."/>
            <person name="Bajic V.B."/>
            <person name="Brenner S.E."/>
            <person name="Batalov S."/>
            <person name="Forrest A.R."/>
            <person name="Zavolan M."/>
            <person name="Davis M.J."/>
            <person name="Wilming L.G."/>
            <person name="Aidinis V."/>
            <person name="Allen J.E."/>
            <person name="Ambesi-Impiombato A."/>
            <person name="Apweiler R."/>
            <person name="Aturaliya R.N."/>
            <person name="Bailey T.L."/>
            <person name="Bansal M."/>
            <person name="Baxter L."/>
            <person name="Beisel K.W."/>
            <person name="Bersano T."/>
            <person name="Bono H."/>
            <person name="Chalk A.M."/>
            <person name="Chiu K.P."/>
            <person name="Choudhary V."/>
            <person name="Christoffels A."/>
            <person name="Clutterbuck D.R."/>
            <person name="Crowe M.L."/>
            <person name="Dalla E."/>
            <person name="Dalrymple B.P."/>
            <person name="de Bono B."/>
            <person name="Della Gatta G."/>
            <person name="di Bernardo D."/>
            <person name="Down T."/>
            <person name="Engstrom P."/>
            <person name="Fagiolini M."/>
            <person name="Faulkner G."/>
            <person name="Fletcher C.F."/>
            <person name="Fukushima T."/>
            <person name="Furuno M."/>
            <person name="Futaki S."/>
            <person name="Gariboldi M."/>
            <person name="Georgii-Hemming P."/>
            <person name="Gingeras T.R."/>
            <person name="Gojobori T."/>
            <person name="Green R.E."/>
            <person name="Gustincich S."/>
            <person name="Harbers M."/>
            <person name="Hayashi Y."/>
            <person name="Hensch T.K."/>
            <person name="Hirokawa N."/>
            <person name="Hill D."/>
            <person name="Huminiecki L."/>
            <person name="Iacono M."/>
            <person name="Ikeo K."/>
            <person name="Iwama A."/>
            <person name="Ishikawa T."/>
            <person name="Jakt M."/>
            <person name="Kanapin A."/>
            <person name="Katoh M."/>
            <person name="Kawasawa Y."/>
            <person name="Kelso J."/>
            <person name="Kitamura H."/>
            <person name="Kitano H."/>
            <person name="Kollias G."/>
            <person name="Krishnan S.P."/>
            <person name="Kruger A."/>
            <person name="Kummerfeld S.K."/>
            <person name="Kurochkin I.V."/>
            <person name="Lareau L.F."/>
            <person name="Lazarevic D."/>
            <person name="Lipovich L."/>
            <person name="Liu J."/>
            <person name="Liuni S."/>
            <person name="McWilliam S."/>
            <person name="Madan Babu M."/>
            <person name="Madera M."/>
            <person name="Marchionni L."/>
            <person name="Matsuda H."/>
            <person name="Matsuzawa S."/>
            <person name="Miki H."/>
            <person name="Mignone F."/>
            <person name="Miyake S."/>
            <person name="Morris K."/>
            <person name="Mottagui-Tabar S."/>
            <person name="Mulder N."/>
            <person name="Nakano N."/>
            <person name="Nakauchi H."/>
            <person name="Ng P."/>
            <person name="Nilsson R."/>
            <person name="Nishiguchi S."/>
            <person name="Nishikawa S."/>
            <person name="Nori F."/>
            <person name="Ohara O."/>
            <person name="Okazaki Y."/>
            <person name="Orlando V."/>
            <person name="Pang K.C."/>
            <person name="Pavan W.J."/>
            <person name="Pavesi G."/>
            <person name="Pesole G."/>
            <person name="Petrovsky N."/>
            <person name="Piazza S."/>
            <person name="Reed J."/>
            <person name="Reid J.F."/>
            <person name="Ring B.Z."/>
            <person name="Ringwald M."/>
            <person name="Rost B."/>
            <person name="Ruan Y."/>
            <person name="Salzberg S.L."/>
            <person name="Sandelin A."/>
            <person name="Schneider C."/>
            <person name="Schoenbach C."/>
            <person name="Sekiguchi K."/>
            <person name="Semple C.A."/>
            <person name="Seno S."/>
            <person name="Sessa L."/>
            <person name="Sheng Y."/>
            <person name="Shibata Y."/>
            <person name="Shimada H."/>
            <person name="Shimada K."/>
            <person name="Silva D."/>
            <person name="Sinclair B."/>
            <person name="Sperling S."/>
            <person name="Stupka E."/>
            <person name="Sugiura K."/>
            <person name="Sultana R."/>
            <person name="Takenaka Y."/>
            <person name="Taki K."/>
            <person name="Tammoja K."/>
            <person name="Tan S.L."/>
            <person name="Tang S."/>
            <person name="Taylor M.S."/>
            <person name="Tegner J."/>
            <person name="Teichmann S.A."/>
            <person name="Ueda H.R."/>
            <person name="van Nimwegen E."/>
            <person name="Verardo R."/>
            <person name="Wei C.L."/>
            <person name="Yagi K."/>
            <person name="Yamanishi H."/>
            <person name="Zabarovsky E."/>
            <person name="Zhu S."/>
            <person name="Zimmer A."/>
            <person name="Hide W."/>
            <person name="Bult C."/>
            <person name="Grimmond S.M."/>
            <person name="Teasdale R.D."/>
            <person name="Liu E.T."/>
            <person name="Brusic V."/>
            <person name="Quackenbush J."/>
            <person name="Wahlestedt C."/>
            <person name="Mattick J.S."/>
            <person name="Hume D.A."/>
            <person name="Kai C."/>
            <person name="Sasaki D."/>
            <person name="Tomaru Y."/>
            <person name="Fukuda S."/>
            <person name="Kanamori-Katayama M."/>
            <person name="Suzuki M."/>
            <person name="Aoki J."/>
            <person name="Arakawa T."/>
            <person name="Iida J."/>
            <person name="Imamura K."/>
            <person name="Itoh M."/>
            <person name="Kato T."/>
            <person name="Kawaji H."/>
            <person name="Kawagashira N."/>
            <person name="Kawashima T."/>
            <person name="Kojima M."/>
            <person name="Kondo S."/>
            <person name="Konno H."/>
            <person name="Nakano K."/>
            <person name="Ninomiya N."/>
            <person name="Nishio T."/>
            <person name="Okada M."/>
            <person name="Plessy C."/>
            <person name="Shibata K."/>
            <person name="Shiraki T."/>
            <person name="Suzuki S."/>
            <person name="Tagami M."/>
            <person name="Waki K."/>
            <person name="Watahiki A."/>
            <person name="Okamura-Oho Y."/>
            <person name="Suzuki H."/>
            <person name="Kawai J."/>
            <person name="Hayashizaki Y."/>
        </authorList>
    </citation>
    <scope>NUCLEOTIDE SEQUENCE [LARGE SCALE MRNA] OF 253-575 (ISOFORM 2)</scope>
    <source>
        <strain>C57BL/6J</strain>
        <tissue>Stomach</tissue>
    </source>
</reference>
<reference key="4">
    <citation type="journal article" date="2004" name="DNA Res.">
        <title>Prediction of the coding sequences of mouse homologues of FLJ genes: the complete nucleotide sequences of 110 mouse FLJ-homologous cDNAs identified by screening of terminal sequences of cDNA clones randomly sampled from size-fractionated libraries.</title>
        <authorList>
            <person name="Okazaki N."/>
            <person name="Kikuno R."/>
            <person name="Ohara R."/>
            <person name="Inamoto S."/>
            <person name="Koseki H."/>
            <person name="Hiraoka S."/>
            <person name="Saga Y."/>
            <person name="Kitamura H."/>
            <person name="Nakagawa T."/>
            <person name="Nagase T."/>
            <person name="Ohara O."/>
            <person name="Koga H."/>
        </authorList>
    </citation>
    <scope>NUCLEOTIDE SEQUENCE [LARGE SCALE MRNA] OF 541-776</scope>
    <source>
        <tissue>Spleen</tissue>
    </source>
</reference>
<reference key="5">
    <citation type="journal article" date="2010" name="Cell">
        <title>A tissue-specific atlas of mouse protein phosphorylation and expression.</title>
        <authorList>
            <person name="Huttlin E.L."/>
            <person name="Jedrychowski M.P."/>
            <person name="Elias J.E."/>
            <person name="Goswami T."/>
            <person name="Rad R."/>
            <person name="Beausoleil S.A."/>
            <person name="Villen J."/>
            <person name="Haas W."/>
            <person name="Sowa M.E."/>
            <person name="Gygi S.P."/>
        </authorList>
    </citation>
    <scope>IDENTIFICATION BY MASS SPECTROMETRY [LARGE SCALE ANALYSIS]</scope>
    <source>
        <tissue>Brain</tissue>
        <tissue>Brown adipose tissue</tissue>
        <tissue>Spleen</tissue>
        <tissue>Testis</tissue>
    </source>
</reference>
<reference key="6">
    <citation type="journal article" date="2012" name="Mol. Cell. Proteomics">
        <title>Five friends of methylated chromatin target of protein-arginine-methyltransferase[prmt]-1 (chtop), a complex linking arginine methylation to desumoylation.</title>
        <authorList>
            <person name="Fanis P."/>
            <person name="Gillemans N."/>
            <person name="Aghajanirefah A."/>
            <person name="Pourfarzad F."/>
            <person name="Demmers J."/>
            <person name="Esteghamat F."/>
            <person name="Vadlamudi R.K."/>
            <person name="Grosveld F."/>
            <person name="Philipsen S."/>
            <person name="van Dijk T.B."/>
        </authorList>
    </citation>
    <scope>FUNCTION</scope>
    <scope>IDENTIFICATION IN THE 5FMC COMPLEX</scope>
    <scope>INTERACTION OF THE 5FMC COMPLEX WITH CHTOP AND ZNF148</scope>
    <scope>SUBCELLULAR LOCATION</scope>
</reference>
<feature type="chain" id="PRO_0000390998" description="Ribosomal biogenesis protein LAS1L">
    <location>
        <begin position="1"/>
        <end position="776"/>
    </location>
</feature>
<feature type="region of interest" description="Disordered" evidence="2">
    <location>
        <begin position="185"/>
        <end position="247"/>
    </location>
</feature>
<feature type="region of interest" description="Disordered" evidence="2">
    <location>
        <begin position="501"/>
        <end position="646"/>
    </location>
</feature>
<feature type="region of interest" description="Interaction with NOL9" evidence="1">
    <location>
        <begin position="677"/>
        <end position="696"/>
    </location>
</feature>
<feature type="region of interest" description="Disordered" evidence="2">
    <location>
        <begin position="733"/>
        <end position="759"/>
    </location>
</feature>
<feature type="compositionally biased region" description="Acidic residues" evidence="2">
    <location>
        <begin position="185"/>
        <end position="227"/>
    </location>
</feature>
<feature type="compositionally biased region" description="Basic and acidic residues" evidence="2">
    <location>
        <begin position="228"/>
        <end position="247"/>
    </location>
</feature>
<feature type="compositionally biased region" description="Basic and acidic residues" evidence="2">
    <location>
        <begin position="544"/>
        <end position="557"/>
    </location>
</feature>
<feature type="compositionally biased region" description="Acidic residues" evidence="2">
    <location>
        <begin position="558"/>
        <end position="602"/>
    </location>
</feature>
<feature type="compositionally biased region" description="Acidic residues" evidence="2">
    <location>
        <begin position="611"/>
        <end position="646"/>
    </location>
</feature>
<feature type="compositionally biased region" description="Low complexity" evidence="2">
    <location>
        <begin position="741"/>
        <end position="755"/>
    </location>
</feature>
<feature type="modified residue" description="Phosphoserine" evidence="1">
    <location>
        <position position="425"/>
    </location>
</feature>
<feature type="modified residue" description="Phosphoserine" evidence="1">
    <location>
        <position position="509"/>
    </location>
</feature>
<feature type="modified residue" description="Phosphoserine" evidence="1">
    <location>
        <position position="658"/>
    </location>
</feature>
<feature type="splice variant" id="VSP_038670" description="In isoform 2." evidence="4">
    <original>DGQTEVQKGEVTEPNSHK</original>
    <variation>E</variation>
    <location>
        <begin position="332"/>
        <end position="349"/>
    </location>
</feature>
<proteinExistence type="evidence at protein level"/>
<protein>
    <recommendedName>
        <fullName>Ribosomal biogenesis protein LAS1L</fullName>
    </recommendedName>
    <alternativeName>
        <fullName evidence="1">Endoribonuclease LAS1L</fullName>
        <ecNumber>3.1.-.-</ecNumber>
    </alternativeName>
    <alternativeName>
        <fullName>Protein LAS1 homolog</fullName>
    </alternativeName>
</protein>
<sequence>MDRVWRAWDGQSFKENQPESPSARGIVVSWLSRAEWEQVTVYLFCDDHKLQQYALNRITVWRSRLGNELPLAVASTADLVRCKLIDAAGTLGTDELRLLYGMALVRFVNLISERKTKCSNLPLKYLAQEVNIPDWIVELRHNLTHKKMPHINECRRGCYFVLNWLQKTYWSRQLEGSLKETWELDEDQLDAEDPEEEEREIIADDVLEEIPEPQDDDKDEELAVEDDANTKGNEEVASHPEPSSRHKELYEKARELLVSYEEEQFKVLEKHRHLLQAIKVWNNLSPRVQCILEELKSISWENRDAVLDAFLDDGFLIPTFEQLAALQIEYEDGQTEVQKGEVTEPNSHKNIDLNEVLVPKPFSQFWQPLLRGLHSQTFTQALLERMFSELSTVGSTGIRPTYILRWTVELIVANTKTGRNARRFSASQWEARKSWRLFNCSATLDWPQVIESCLGSPCWASPQLLQVVFKAMGQVLPDEEQEKLLRVCSIYTQNGENGLAKAIEGSSSSSTGKAPYTLDTLHEDLQPPGTNCESEESIQQKEQGNLKDVKQEEKKENEEEEKEEEEMEEEEEEEEEEKEEEEEEQEQEEHQEEEQEEEEEEENQKVFQDQMEADVEESDDVEEEEEVDDEEEDEDDDYDDDEEEDRMEVGAFSLAQGSSVFENTRTTSRKREALQGSAWQVSSEDVRWGTFPLGRLPGQTEDPAELMLDNYDTMYLLDQPVIEHRLEPQKSKSSTLSLCCGGSNTNSSSSSSSGNMEGLLWNQGQMHGLKAGLQLF</sequence>
<dbReference type="EC" id="3.1.-.-"/>
<dbReference type="EMBL" id="BX005184">
    <property type="status" value="NOT_ANNOTATED_CDS"/>
    <property type="molecule type" value="Genomic_DNA"/>
</dbReference>
<dbReference type="EMBL" id="BC141155">
    <property type="protein sequence ID" value="AAI41156.1"/>
    <property type="molecule type" value="mRNA"/>
</dbReference>
<dbReference type="EMBL" id="AK052578">
    <property type="protein sequence ID" value="BAC35047.1"/>
    <property type="molecule type" value="mRNA"/>
</dbReference>
<dbReference type="EMBL" id="AK131142">
    <property type="protein sequence ID" value="BAD21392.1"/>
    <property type="molecule type" value="mRNA"/>
</dbReference>
<dbReference type="CCDS" id="CCDS30287.1">
    <molecule id="A2BE28-2"/>
</dbReference>
<dbReference type="RefSeq" id="NP_001361646.1">
    <molecule id="A2BE28-1"/>
    <property type="nucleotide sequence ID" value="NM_001374717.1"/>
</dbReference>
<dbReference type="RefSeq" id="NP_690035.2">
    <molecule id="A2BE28-2"/>
    <property type="nucleotide sequence ID" value="NM_152822.3"/>
</dbReference>
<dbReference type="RefSeq" id="XP_006528397.1">
    <property type="nucleotide sequence ID" value="XM_006528334.2"/>
</dbReference>
<dbReference type="SMR" id="A2BE28"/>
<dbReference type="BioGRID" id="217980">
    <property type="interactions" value="24"/>
</dbReference>
<dbReference type="FunCoup" id="A2BE28">
    <property type="interactions" value="1341"/>
</dbReference>
<dbReference type="IntAct" id="A2BE28">
    <property type="interactions" value="2"/>
</dbReference>
<dbReference type="MINT" id="A2BE28"/>
<dbReference type="STRING" id="10090.ENSMUSP00000078901"/>
<dbReference type="GlyGen" id="A2BE28">
    <property type="glycosylation" value="2 sites, 1 N-linked glycan (1 site), 1 O-linked glycan (1 site)"/>
</dbReference>
<dbReference type="iPTMnet" id="A2BE28"/>
<dbReference type="PhosphoSitePlus" id="A2BE28"/>
<dbReference type="PaxDb" id="10090-ENSMUSP00000078901"/>
<dbReference type="PeptideAtlas" id="A2BE28"/>
<dbReference type="ProteomicsDB" id="265044">
    <molecule id="A2BE28-1"/>
</dbReference>
<dbReference type="ProteomicsDB" id="265045">
    <molecule id="A2BE28-2"/>
</dbReference>
<dbReference type="Pumba" id="A2BE28"/>
<dbReference type="Antibodypedia" id="13076">
    <property type="antibodies" value="157 antibodies from 26 providers"/>
</dbReference>
<dbReference type="Ensembl" id="ENSMUST00000079987.13">
    <molecule id="A2BE28-2"/>
    <property type="protein sequence ID" value="ENSMUSP00000078901.7"/>
    <property type="gene ID" value="ENSMUSG00000057421.13"/>
</dbReference>
<dbReference type="Ensembl" id="ENSMUST00000113864.3">
    <molecule id="A2BE28-1"/>
    <property type="protein sequence ID" value="ENSMUSP00000109495.3"/>
    <property type="gene ID" value="ENSMUSG00000057421.13"/>
</dbReference>
<dbReference type="GeneID" id="76130"/>
<dbReference type="KEGG" id="mmu:76130"/>
<dbReference type="UCSC" id="uc009tud.2">
    <molecule id="A2BE28-2"/>
    <property type="organism name" value="mouse"/>
</dbReference>
<dbReference type="AGR" id="MGI:1923380"/>
<dbReference type="CTD" id="81887"/>
<dbReference type="MGI" id="MGI:1923380">
    <property type="gene designation" value="Las1l"/>
</dbReference>
<dbReference type="VEuPathDB" id="HostDB:ENSMUSG00000057421"/>
<dbReference type="eggNOG" id="KOG2425">
    <property type="taxonomic scope" value="Eukaryota"/>
</dbReference>
<dbReference type="GeneTree" id="ENSGT00390000014785"/>
<dbReference type="HOGENOM" id="CLU_028117_0_0_1"/>
<dbReference type="InParanoid" id="A2BE28"/>
<dbReference type="OMA" id="QCNKQVS"/>
<dbReference type="OrthoDB" id="10263222at2759"/>
<dbReference type="TreeFam" id="TF314042"/>
<dbReference type="Reactome" id="R-MMU-6791226">
    <property type="pathway name" value="Major pathway of rRNA processing in the nucleolus and cytosol"/>
</dbReference>
<dbReference type="BioGRID-ORCS" id="76130">
    <property type="hits" value="28 hits in 81 CRISPR screens"/>
</dbReference>
<dbReference type="ChiTaRS" id="Las1l">
    <property type="organism name" value="mouse"/>
</dbReference>
<dbReference type="PRO" id="PR:A2BE28"/>
<dbReference type="Proteomes" id="UP000000589">
    <property type="component" value="Chromosome X"/>
</dbReference>
<dbReference type="RNAct" id="A2BE28">
    <property type="molecule type" value="protein"/>
</dbReference>
<dbReference type="Bgee" id="ENSMUSG00000057421">
    <property type="expression patterns" value="Expressed in ectoplacental cone and 267 other cell types or tissues"/>
</dbReference>
<dbReference type="GO" id="GO:0090730">
    <property type="term" value="C:Las1 complex"/>
    <property type="evidence" value="ECO:0007669"/>
    <property type="project" value="InterPro"/>
</dbReference>
<dbReference type="GO" id="GO:0071339">
    <property type="term" value="C:MLL1 complex"/>
    <property type="evidence" value="ECO:0000250"/>
    <property type="project" value="UniProtKB"/>
</dbReference>
<dbReference type="GO" id="GO:0005730">
    <property type="term" value="C:nucleolus"/>
    <property type="evidence" value="ECO:0000250"/>
    <property type="project" value="UniProtKB"/>
</dbReference>
<dbReference type="GO" id="GO:0004519">
    <property type="term" value="F:endonuclease activity"/>
    <property type="evidence" value="ECO:0007669"/>
    <property type="project" value="InterPro"/>
</dbReference>
<dbReference type="GO" id="GO:0006364">
    <property type="term" value="P:rRNA processing"/>
    <property type="evidence" value="ECO:0000250"/>
    <property type="project" value="UniProtKB"/>
</dbReference>
<dbReference type="InterPro" id="IPR007174">
    <property type="entry name" value="Las1"/>
</dbReference>
<dbReference type="PANTHER" id="PTHR15002">
    <property type="entry name" value="RIBOSOMAL BIOGENESIS PROTEIN LAS1L"/>
    <property type="match status" value="1"/>
</dbReference>
<dbReference type="PANTHER" id="PTHR15002:SF0">
    <property type="entry name" value="RIBOSOMAL BIOGENESIS PROTEIN LAS1L"/>
    <property type="match status" value="1"/>
</dbReference>
<dbReference type="Pfam" id="PF04031">
    <property type="entry name" value="Las1"/>
    <property type="match status" value="1"/>
</dbReference>